<sequence>MKYSDLRDFISQLEKIGQLKRITQPISTHLTMTEISDRTLRAKGPALLFENAVSESGEPYNMPVLTNLFGTPDRVALAMGQKDVGALRDVGKLLAMLKEPEPPKGFRDALGKIPVYKQVLNMPVKVIKKPLCQQIVLSGDDVDLTKMPIQSCWPGDVAPLITWGLTVTRGPHKERQNLGIYRQQVLSKNKVIMRWLSHRGGALDFQEFKKENPGEKYPVSVALGADPATILGAVTPVPDTLSEYAFAGLLRGAKTEVAKSISNDLEVPATAEIILEGYLDPEEMAPEGPYGDHTGYYNEVDNFPVMTVTHITMRKDAIYHSTYTGRPPDEPAILGVALNEVFVPILQKQFPEIQDFYLPPEGCSYRLAVVTIKKQYAGHAKRVMMGVWSFLRQFMYTKFVIVCDDDINARDWEDVIWAMTTRMDPSRDTVLIENTPIDYLDFASPVSGLGSKMGMDATNKWPGETNREWGEPIEMTQEIKNQVDELWDELDIL</sequence>
<gene>
    <name evidence="1" type="primary">ubiD</name>
    <name type="ordered locus">CPS_0177</name>
</gene>
<proteinExistence type="inferred from homology"/>
<reference key="1">
    <citation type="journal article" date="2005" name="Proc. Natl. Acad. Sci. U.S.A.">
        <title>The psychrophilic lifestyle as revealed by the genome sequence of Colwellia psychrerythraea 34H through genomic and proteomic analyses.</title>
        <authorList>
            <person name="Methe B.A."/>
            <person name="Nelson K.E."/>
            <person name="Deming J.W."/>
            <person name="Momen B."/>
            <person name="Melamud E."/>
            <person name="Zhang X."/>
            <person name="Moult J."/>
            <person name="Madupu R."/>
            <person name="Nelson W.C."/>
            <person name="Dodson R.J."/>
            <person name="Brinkac L.M."/>
            <person name="Daugherty S.C."/>
            <person name="Durkin A.S."/>
            <person name="DeBoy R.T."/>
            <person name="Kolonay J.F."/>
            <person name="Sullivan S.A."/>
            <person name="Zhou L."/>
            <person name="Davidsen T.M."/>
            <person name="Wu M."/>
            <person name="Huston A.L."/>
            <person name="Lewis M."/>
            <person name="Weaver B."/>
            <person name="Weidman J.F."/>
            <person name="Khouri H."/>
            <person name="Utterback T.R."/>
            <person name="Feldblyum T.V."/>
            <person name="Fraser C.M."/>
        </authorList>
    </citation>
    <scope>NUCLEOTIDE SEQUENCE [LARGE SCALE GENOMIC DNA]</scope>
    <source>
        <strain>34H / ATCC BAA-681</strain>
    </source>
</reference>
<protein>
    <recommendedName>
        <fullName evidence="1">3-octaprenyl-4-hydroxybenzoate carboxy-lyase</fullName>
        <ecNumber evidence="1">4.1.1.98</ecNumber>
    </recommendedName>
    <alternativeName>
        <fullName evidence="1">Polyprenyl p-hydroxybenzoate decarboxylase</fullName>
    </alternativeName>
</protein>
<evidence type="ECO:0000255" key="1">
    <source>
        <dbReference type="HAMAP-Rule" id="MF_01636"/>
    </source>
</evidence>
<evidence type="ECO:0000305" key="2"/>
<keyword id="KW-1003">Cell membrane</keyword>
<keyword id="KW-0210">Decarboxylase</keyword>
<keyword id="KW-0285">Flavoprotein</keyword>
<keyword id="KW-0288">FMN</keyword>
<keyword id="KW-0456">Lyase</keyword>
<keyword id="KW-0464">Manganese</keyword>
<keyword id="KW-0472">Membrane</keyword>
<keyword id="KW-0479">Metal-binding</keyword>
<keyword id="KW-0831">Ubiquinone biosynthesis</keyword>
<organism>
    <name type="scientific">Colwellia psychrerythraea (strain 34H / ATCC BAA-681)</name>
    <name type="common">Vibrio psychroerythus</name>
    <dbReference type="NCBI Taxonomy" id="167879"/>
    <lineage>
        <taxon>Bacteria</taxon>
        <taxon>Pseudomonadati</taxon>
        <taxon>Pseudomonadota</taxon>
        <taxon>Gammaproteobacteria</taxon>
        <taxon>Alteromonadales</taxon>
        <taxon>Colwelliaceae</taxon>
        <taxon>Colwellia</taxon>
    </lineage>
</organism>
<accession>Q48AG8</accession>
<feature type="chain" id="PRO_0000267661" description="3-octaprenyl-4-hydroxybenzoate carboxy-lyase">
    <location>
        <begin position="1"/>
        <end position="493"/>
    </location>
</feature>
<feature type="active site" description="Proton donor" evidence="1">
    <location>
        <position position="292"/>
    </location>
</feature>
<feature type="binding site" evidence="1">
    <location>
        <position position="177"/>
    </location>
    <ligand>
        <name>Mn(2+)</name>
        <dbReference type="ChEBI" id="CHEBI:29035"/>
    </ligand>
</feature>
<feature type="binding site" evidence="1">
    <location>
        <begin position="180"/>
        <end position="182"/>
    </location>
    <ligand>
        <name>prenylated FMN</name>
        <dbReference type="ChEBI" id="CHEBI:87746"/>
    </ligand>
</feature>
<feature type="binding site" evidence="1">
    <location>
        <begin position="194"/>
        <end position="196"/>
    </location>
    <ligand>
        <name>prenylated FMN</name>
        <dbReference type="ChEBI" id="CHEBI:87746"/>
    </ligand>
</feature>
<feature type="binding site" evidence="1">
    <location>
        <begin position="199"/>
        <end position="200"/>
    </location>
    <ligand>
        <name>prenylated FMN</name>
        <dbReference type="ChEBI" id="CHEBI:87746"/>
    </ligand>
</feature>
<feature type="binding site" evidence="1">
    <location>
        <position position="243"/>
    </location>
    <ligand>
        <name>Mn(2+)</name>
        <dbReference type="ChEBI" id="CHEBI:29035"/>
    </ligand>
</feature>
<dbReference type="EC" id="4.1.1.98" evidence="1"/>
<dbReference type="EMBL" id="CP000083">
    <property type="protein sequence ID" value="AAZ25184.1"/>
    <property type="status" value="ALT_INIT"/>
    <property type="molecule type" value="Genomic_DNA"/>
</dbReference>
<dbReference type="RefSeq" id="WP_041736529.1">
    <property type="nucleotide sequence ID" value="NC_003910.7"/>
</dbReference>
<dbReference type="SMR" id="Q48AG8"/>
<dbReference type="STRING" id="167879.CPS_0177"/>
<dbReference type="KEGG" id="cps:CPS_0177"/>
<dbReference type="eggNOG" id="COG0043">
    <property type="taxonomic scope" value="Bacteria"/>
</dbReference>
<dbReference type="HOGENOM" id="CLU_023348_4_1_6"/>
<dbReference type="UniPathway" id="UPA00232"/>
<dbReference type="Proteomes" id="UP000000547">
    <property type="component" value="Chromosome"/>
</dbReference>
<dbReference type="GO" id="GO:0005829">
    <property type="term" value="C:cytosol"/>
    <property type="evidence" value="ECO:0007669"/>
    <property type="project" value="TreeGrafter"/>
</dbReference>
<dbReference type="GO" id="GO:0005886">
    <property type="term" value="C:plasma membrane"/>
    <property type="evidence" value="ECO:0007669"/>
    <property type="project" value="UniProtKB-SubCell"/>
</dbReference>
<dbReference type="GO" id="GO:0008694">
    <property type="term" value="F:3-octaprenyl-4-hydroxybenzoate carboxy-lyase activity"/>
    <property type="evidence" value="ECO:0007669"/>
    <property type="project" value="UniProtKB-UniRule"/>
</dbReference>
<dbReference type="GO" id="GO:0046872">
    <property type="term" value="F:metal ion binding"/>
    <property type="evidence" value="ECO:0007669"/>
    <property type="project" value="UniProtKB-KW"/>
</dbReference>
<dbReference type="GO" id="GO:0006744">
    <property type="term" value="P:ubiquinone biosynthetic process"/>
    <property type="evidence" value="ECO:0007669"/>
    <property type="project" value="UniProtKB-UniRule"/>
</dbReference>
<dbReference type="FunFam" id="3.40.1670.10:FF:000001">
    <property type="entry name" value="3-octaprenyl-4-hydroxybenzoate carboxy-lyase"/>
    <property type="match status" value="1"/>
</dbReference>
<dbReference type="Gene3D" id="1.20.5.570">
    <property type="entry name" value="Single helix bin"/>
    <property type="match status" value="1"/>
</dbReference>
<dbReference type="Gene3D" id="3.40.1670.10">
    <property type="entry name" value="UbiD C-terminal domain-like"/>
    <property type="match status" value="1"/>
</dbReference>
<dbReference type="HAMAP" id="MF_01636">
    <property type="entry name" value="UbiD"/>
    <property type="match status" value="1"/>
</dbReference>
<dbReference type="InterPro" id="IPR002830">
    <property type="entry name" value="UbiD"/>
</dbReference>
<dbReference type="InterPro" id="IPR049381">
    <property type="entry name" value="UbiD-like_C"/>
</dbReference>
<dbReference type="InterPro" id="IPR049383">
    <property type="entry name" value="UbiD-like_N"/>
</dbReference>
<dbReference type="InterPro" id="IPR023677">
    <property type="entry name" value="UbiD_bacteria"/>
</dbReference>
<dbReference type="InterPro" id="IPR048304">
    <property type="entry name" value="UbiD_Rift_dom"/>
</dbReference>
<dbReference type="NCBIfam" id="NF008175">
    <property type="entry name" value="PRK10922.1"/>
    <property type="match status" value="1"/>
</dbReference>
<dbReference type="NCBIfam" id="TIGR00148">
    <property type="entry name" value="UbiD family decarboxylase"/>
    <property type="match status" value="1"/>
</dbReference>
<dbReference type="PANTHER" id="PTHR30108">
    <property type="entry name" value="3-OCTAPRENYL-4-HYDROXYBENZOATE CARBOXY-LYASE-RELATED"/>
    <property type="match status" value="1"/>
</dbReference>
<dbReference type="PANTHER" id="PTHR30108:SF17">
    <property type="entry name" value="FERULIC ACID DECARBOXYLASE 1"/>
    <property type="match status" value="1"/>
</dbReference>
<dbReference type="Pfam" id="PF01977">
    <property type="entry name" value="UbiD"/>
    <property type="match status" value="1"/>
</dbReference>
<dbReference type="Pfam" id="PF20696">
    <property type="entry name" value="UbiD_C"/>
    <property type="match status" value="1"/>
</dbReference>
<dbReference type="Pfam" id="PF20695">
    <property type="entry name" value="UbiD_N"/>
    <property type="match status" value="1"/>
</dbReference>
<dbReference type="SUPFAM" id="SSF50475">
    <property type="entry name" value="FMN-binding split barrel"/>
    <property type="match status" value="1"/>
</dbReference>
<dbReference type="SUPFAM" id="SSF143968">
    <property type="entry name" value="UbiD C-terminal domain-like"/>
    <property type="match status" value="1"/>
</dbReference>
<comment type="function">
    <text evidence="1">Catalyzes the decarboxylation of 3-octaprenyl-4-hydroxy benzoate to 2-octaprenylphenol, an intermediate step in ubiquinone biosynthesis.</text>
</comment>
<comment type="catalytic activity">
    <reaction evidence="1">
        <text>a 4-hydroxy-3-(all-trans-polyprenyl)benzoate + H(+) = a 2-(all-trans-polyprenyl)phenol + CO2</text>
        <dbReference type="Rhea" id="RHEA:41680"/>
        <dbReference type="Rhea" id="RHEA-COMP:9514"/>
        <dbReference type="Rhea" id="RHEA-COMP:9516"/>
        <dbReference type="ChEBI" id="CHEBI:1269"/>
        <dbReference type="ChEBI" id="CHEBI:15378"/>
        <dbReference type="ChEBI" id="CHEBI:16526"/>
        <dbReference type="ChEBI" id="CHEBI:78396"/>
        <dbReference type="EC" id="4.1.1.98"/>
    </reaction>
</comment>
<comment type="cofactor">
    <cofactor evidence="1">
        <name>prenylated FMN</name>
        <dbReference type="ChEBI" id="CHEBI:87746"/>
    </cofactor>
    <text evidence="1">Binds 1 prenylated FMN per subunit.</text>
</comment>
<comment type="cofactor">
    <cofactor evidence="1">
        <name>Mn(2+)</name>
        <dbReference type="ChEBI" id="CHEBI:29035"/>
    </cofactor>
</comment>
<comment type="pathway">
    <text evidence="1">Cofactor biosynthesis; ubiquinone biosynthesis.</text>
</comment>
<comment type="subunit">
    <text evidence="1">Homohexamer.</text>
</comment>
<comment type="subcellular location">
    <subcellularLocation>
        <location evidence="1">Cell membrane</location>
        <topology evidence="1">Peripheral membrane protein</topology>
    </subcellularLocation>
</comment>
<comment type="similarity">
    <text evidence="1">Belongs to the UbiD family.</text>
</comment>
<comment type="sequence caution" evidence="2">
    <conflict type="erroneous initiation">
        <sequence resource="EMBL-CDS" id="AAZ25184"/>
    </conflict>
</comment>
<name>UBID_COLP3</name>